<gene>
    <name evidence="1" type="primary">alaS</name>
    <name type="ordered locus">Dshi_1642</name>
</gene>
<keyword id="KW-0030">Aminoacyl-tRNA synthetase</keyword>
<keyword id="KW-0067">ATP-binding</keyword>
<keyword id="KW-0963">Cytoplasm</keyword>
<keyword id="KW-0436">Ligase</keyword>
<keyword id="KW-0479">Metal-binding</keyword>
<keyword id="KW-0547">Nucleotide-binding</keyword>
<keyword id="KW-0648">Protein biosynthesis</keyword>
<keyword id="KW-1185">Reference proteome</keyword>
<keyword id="KW-0694">RNA-binding</keyword>
<keyword id="KW-0820">tRNA-binding</keyword>
<keyword id="KW-0862">Zinc</keyword>
<evidence type="ECO:0000255" key="1">
    <source>
        <dbReference type="HAMAP-Rule" id="MF_00036"/>
    </source>
</evidence>
<proteinExistence type="inferred from homology"/>
<sequence>MPSLNEIRSTFLNFFGGHGHEIVDSSPLVPRNDPTLMFTNAGMVQFKNVFTGLEHRDYNRATTSQKCVRAGGKHNDLDNVGYTARHHTFFEMLGNFSFGDYFKEDAIPFAWDLITKEFGIDKSRLLVTVYHTDDEAAEIWKKHAGLSDDRIIRIPTNDNFWMMGPTGPCGPCTEIFYDHGDHIWGGPPGSPEEDGDRFIEIWNLVFMQFEQFEDGTREPLPKPSIDTGMGLERIGALLQGSHDNYDTDLFKTLIEASAHATSVDPYGDKNVHHRVIADHLRSTSFLIADGVMPSNEGRGYVLRRIMRRAMRHAHLLGAQDPVMYRLVPALVGQMGQAFPELGRAQALIEETLMLEETRFRQTLDRGLKLLDEAVADVPEGGALPGETAFKLYDTYGFPLDLTQDALREKGRAVETEGFDAAMADQKAKARAAWAGSGETADESIWFDLAETHGATEFLGYDTEVAEGQVLALVKDGAQVAQLAEGETGWMVLNQTPFYAESGGQVGDSGGYLKSNGSGAIHDTQKRNGLFAHKVTPKAQPLKAGDVLEMRVDPARRTAIRANHSATHLLHEALRQALGAHVAQRGSLNAADRLRFDFSHSKALTLEELQKVEAEVNAYIRQNSPVETRIMTPDAARDLGAQALFGEKYGDEVRVVSMGRQSGSGKGVSGETYSLELCGGTHVKQTGDIGVFVTVGETASSSGVRRIEALTGEDAFAYLSAQDYRLAEVAASLKAQAADVPERVRSLLDERKALQNEVAQLRRELAMAGGGQGTAAPEAEAVAGVPFLAQSLSGVSGRDLPSLIDEHKARLGSGAILLIADTGGKAAVAAGVTADLTDRLSAVDLVKAAVAELGGKGGGGRPDMAQGGGKDASKADAAIAAAKAVIGG</sequence>
<reference key="1">
    <citation type="journal article" date="2010" name="ISME J.">
        <title>The complete genome sequence of the algal symbiont Dinoroseobacter shibae: a hitchhiker's guide to life in the sea.</title>
        <authorList>
            <person name="Wagner-Dobler I."/>
            <person name="Ballhausen B."/>
            <person name="Berger M."/>
            <person name="Brinkhoff T."/>
            <person name="Buchholz I."/>
            <person name="Bunk B."/>
            <person name="Cypionka H."/>
            <person name="Daniel R."/>
            <person name="Drepper T."/>
            <person name="Gerdts G."/>
            <person name="Hahnke S."/>
            <person name="Han C."/>
            <person name="Jahn D."/>
            <person name="Kalhoefer D."/>
            <person name="Kiss H."/>
            <person name="Klenk H.P."/>
            <person name="Kyrpides N."/>
            <person name="Liebl W."/>
            <person name="Liesegang H."/>
            <person name="Meincke L."/>
            <person name="Pati A."/>
            <person name="Petersen J."/>
            <person name="Piekarski T."/>
            <person name="Pommerenke C."/>
            <person name="Pradella S."/>
            <person name="Pukall R."/>
            <person name="Rabus R."/>
            <person name="Stackebrandt E."/>
            <person name="Thole S."/>
            <person name="Thompson L."/>
            <person name="Tielen P."/>
            <person name="Tomasch J."/>
            <person name="von Jan M."/>
            <person name="Wanphrut N."/>
            <person name="Wichels A."/>
            <person name="Zech H."/>
            <person name="Simon M."/>
        </authorList>
    </citation>
    <scope>NUCLEOTIDE SEQUENCE [LARGE SCALE GENOMIC DNA]</scope>
    <source>
        <strain>DSM 16493 / NCIMB 14021 / DFL 12</strain>
    </source>
</reference>
<feature type="chain" id="PRO_0000347590" description="Alanine--tRNA ligase">
    <location>
        <begin position="1"/>
        <end position="887"/>
    </location>
</feature>
<feature type="binding site" evidence="1">
    <location>
        <position position="563"/>
    </location>
    <ligand>
        <name>Zn(2+)</name>
        <dbReference type="ChEBI" id="CHEBI:29105"/>
    </ligand>
</feature>
<feature type="binding site" evidence="1">
    <location>
        <position position="567"/>
    </location>
    <ligand>
        <name>Zn(2+)</name>
        <dbReference type="ChEBI" id="CHEBI:29105"/>
    </ligand>
</feature>
<feature type="binding site" evidence="1">
    <location>
        <position position="677"/>
    </location>
    <ligand>
        <name>Zn(2+)</name>
        <dbReference type="ChEBI" id="CHEBI:29105"/>
    </ligand>
</feature>
<feature type="binding site" evidence="1">
    <location>
        <position position="681"/>
    </location>
    <ligand>
        <name>Zn(2+)</name>
        <dbReference type="ChEBI" id="CHEBI:29105"/>
    </ligand>
</feature>
<protein>
    <recommendedName>
        <fullName evidence="1">Alanine--tRNA ligase</fullName>
        <ecNumber evidence="1">6.1.1.7</ecNumber>
    </recommendedName>
    <alternativeName>
        <fullName evidence="1">Alanyl-tRNA synthetase</fullName>
        <shortName evidence="1">AlaRS</shortName>
    </alternativeName>
</protein>
<name>SYA_DINSH</name>
<accession>A8LL20</accession>
<comment type="function">
    <text evidence="1">Catalyzes the attachment of alanine to tRNA(Ala) in a two-step reaction: alanine is first activated by ATP to form Ala-AMP and then transferred to the acceptor end of tRNA(Ala). Also edits incorrectly charged Ser-tRNA(Ala) and Gly-tRNA(Ala) via its editing domain.</text>
</comment>
<comment type="catalytic activity">
    <reaction evidence="1">
        <text>tRNA(Ala) + L-alanine + ATP = L-alanyl-tRNA(Ala) + AMP + diphosphate</text>
        <dbReference type="Rhea" id="RHEA:12540"/>
        <dbReference type="Rhea" id="RHEA-COMP:9657"/>
        <dbReference type="Rhea" id="RHEA-COMP:9923"/>
        <dbReference type="ChEBI" id="CHEBI:30616"/>
        <dbReference type="ChEBI" id="CHEBI:33019"/>
        <dbReference type="ChEBI" id="CHEBI:57972"/>
        <dbReference type="ChEBI" id="CHEBI:78442"/>
        <dbReference type="ChEBI" id="CHEBI:78497"/>
        <dbReference type="ChEBI" id="CHEBI:456215"/>
        <dbReference type="EC" id="6.1.1.7"/>
    </reaction>
</comment>
<comment type="cofactor">
    <cofactor evidence="1">
        <name>Zn(2+)</name>
        <dbReference type="ChEBI" id="CHEBI:29105"/>
    </cofactor>
    <text evidence="1">Binds 1 zinc ion per subunit.</text>
</comment>
<comment type="subcellular location">
    <subcellularLocation>
        <location evidence="1">Cytoplasm</location>
    </subcellularLocation>
</comment>
<comment type="domain">
    <text evidence="1">Consists of three domains; the N-terminal catalytic domain, the editing domain and the C-terminal C-Ala domain. The editing domain removes incorrectly charged amino acids, while the C-Ala domain, along with tRNA(Ala), serves as a bridge to cooperatively bring together the editing and aminoacylation centers thus stimulating deacylation of misacylated tRNAs.</text>
</comment>
<comment type="similarity">
    <text evidence="1">Belongs to the class-II aminoacyl-tRNA synthetase family.</text>
</comment>
<dbReference type="EC" id="6.1.1.7" evidence="1"/>
<dbReference type="EMBL" id="CP000830">
    <property type="protein sequence ID" value="ABV93384.1"/>
    <property type="molecule type" value="Genomic_DNA"/>
</dbReference>
<dbReference type="RefSeq" id="WP_012178314.1">
    <property type="nucleotide sequence ID" value="NC_009952.1"/>
</dbReference>
<dbReference type="SMR" id="A8LL20"/>
<dbReference type="STRING" id="398580.Dshi_1642"/>
<dbReference type="KEGG" id="dsh:Dshi_1642"/>
<dbReference type="eggNOG" id="COG0013">
    <property type="taxonomic scope" value="Bacteria"/>
</dbReference>
<dbReference type="HOGENOM" id="CLU_004485_1_1_5"/>
<dbReference type="OrthoDB" id="9803884at2"/>
<dbReference type="Proteomes" id="UP000006833">
    <property type="component" value="Chromosome"/>
</dbReference>
<dbReference type="GO" id="GO:0005829">
    <property type="term" value="C:cytosol"/>
    <property type="evidence" value="ECO:0007669"/>
    <property type="project" value="TreeGrafter"/>
</dbReference>
<dbReference type="GO" id="GO:0004813">
    <property type="term" value="F:alanine-tRNA ligase activity"/>
    <property type="evidence" value="ECO:0007669"/>
    <property type="project" value="UniProtKB-UniRule"/>
</dbReference>
<dbReference type="GO" id="GO:0002161">
    <property type="term" value="F:aminoacyl-tRNA deacylase activity"/>
    <property type="evidence" value="ECO:0007669"/>
    <property type="project" value="TreeGrafter"/>
</dbReference>
<dbReference type="GO" id="GO:0005524">
    <property type="term" value="F:ATP binding"/>
    <property type="evidence" value="ECO:0007669"/>
    <property type="project" value="UniProtKB-UniRule"/>
</dbReference>
<dbReference type="GO" id="GO:0000049">
    <property type="term" value="F:tRNA binding"/>
    <property type="evidence" value="ECO:0007669"/>
    <property type="project" value="UniProtKB-KW"/>
</dbReference>
<dbReference type="GO" id="GO:0008270">
    <property type="term" value="F:zinc ion binding"/>
    <property type="evidence" value="ECO:0007669"/>
    <property type="project" value="UniProtKB-UniRule"/>
</dbReference>
<dbReference type="GO" id="GO:0006419">
    <property type="term" value="P:alanyl-tRNA aminoacylation"/>
    <property type="evidence" value="ECO:0007669"/>
    <property type="project" value="UniProtKB-UniRule"/>
</dbReference>
<dbReference type="GO" id="GO:0045892">
    <property type="term" value="P:negative regulation of DNA-templated transcription"/>
    <property type="evidence" value="ECO:0007669"/>
    <property type="project" value="TreeGrafter"/>
</dbReference>
<dbReference type="CDD" id="cd00673">
    <property type="entry name" value="AlaRS_core"/>
    <property type="match status" value="1"/>
</dbReference>
<dbReference type="FunFam" id="2.40.30.130:FF:000001">
    <property type="entry name" value="Alanine--tRNA ligase"/>
    <property type="match status" value="1"/>
</dbReference>
<dbReference type="FunFam" id="3.10.310.40:FF:000001">
    <property type="entry name" value="Alanine--tRNA ligase"/>
    <property type="match status" value="1"/>
</dbReference>
<dbReference type="FunFam" id="3.30.54.20:FF:000001">
    <property type="entry name" value="Alanine--tRNA ligase"/>
    <property type="match status" value="1"/>
</dbReference>
<dbReference type="FunFam" id="3.30.930.10:FF:000004">
    <property type="entry name" value="Alanine--tRNA ligase"/>
    <property type="match status" value="1"/>
</dbReference>
<dbReference type="FunFam" id="3.30.980.10:FF:000004">
    <property type="entry name" value="Alanine--tRNA ligase, cytoplasmic"/>
    <property type="match status" value="1"/>
</dbReference>
<dbReference type="Gene3D" id="2.40.30.130">
    <property type="match status" value="1"/>
</dbReference>
<dbReference type="Gene3D" id="3.10.310.40">
    <property type="match status" value="1"/>
</dbReference>
<dbReference type="Gene3D" id="3.30.54.20">
    <property type="match status" value="1"/>
</dbReference>
<dbReference type="Gene3D" id="6.10.250.550">
    <property type="match status" value="1"/>
</dbReference>
<dbReference type="Gene3D" id="3.30.930.10">
    <property type="entry name" value="Bira Bifunctional Protein, Domain 2"/>
    <property type="match status" value="1"/>
</dbReference>
<dbReference type="Gene3D" id="3.30.980.10">
    <property type="entry name" value="Threonyl-trna Synthetase, Chain A, domain 2"/>
    <property type="match status" value="1"/>
</dbReference>
<dbReference type="HAMAP" id="MF_00036_B">
    <property type="entry name" value="Ala_tRNA_synth_B"/>
    <property type="match status" value="1"/>
</dbReference>
<dbReference type="InterPro" id="IPR045864">
    <property type="entry name" value="aa-tRNA-synth_II/BPL/LPL"/>
</dbReference>
<dbReference type="InterPro" id="IPR002318">
    <property type="entry name" value="Ala-tRNA-lgiase_IIc"/>
</dbReference>
<dbReference type="InterPro" id="IPR018162">
    <property type="entry name" value="Ala-tRNA-ligase_IIc_anticod-bd"/>
</dbReference>
<dbReference type="InterPro" id="IPR018165">
    <property type="entry name" value="Ala-tRNA-synth_IIc_core"/>
</dbReference>
<dbReference type="InterPro" id="IPR018164">
    <property type="entry name" value="Ala-tRNA-synth_IIc_N"/>
</dbReference>
<dbReference type="InterPro" id="IPR050058">
    <property type="entry name" value="Ala-tRNA_ligase"/>
</dbReference>
<dbReference type="InterPro" id="IPR023033">
    <property type="entry name" value="Ala_tRNA_ligase_euk/bac"/>
</dbReference>
<dbReference type="InterPro" id="IPR003156">
    <property type="entry name" value="DHHA1_dom"/>
</dbReference>
<dbReference type="InterPro" id="IPR018163">
    <property type="entry name" value="Thr/Ala-tRNA-synth_IIc_edit"/>
</dbReference>
<dbReference type="InterPro" id="IPR009000">
    <property type="entry name" value="Transl_B-barrel_sf"/>
</dbReference>
<dbReference type="InterPro" id="IPR012947">
    <property type="entry name" value="tRNA_SAD"/>
</dbReference>
<dbReference type="NCBIfam" id="TIGR00344">
    <property type="entry name" value="alaS"/>
    <property type="match status" value="1"/>
</dbReference>
<dbReference type="PANTHER" id="PTHR11777:SF9">
    <property type="entry name" value="ALANINE--TRNA LIGASE, CYTOPLASMIC"/>
    <property type="match status" value="1"/>
</dbReference>
<dbReference type="PANTHER" id="PTHR11777">
    <property type="entry name" value="ALANYL-TRNA SYNTHETASE"/>
    <property type="match status" value="1"/>
</dbReference>
<dbReference type="Pfam" id="PF02272">
    <property type="entry name" value="DHHA1"/>
    <property type="match status" value="1"/>
</dbReference>
<dbReference type="Pfam" id="PF01411">
    <property type="entry name" value="tRNA-synt_2c"/>
    <property type="match status" value="1"/>
</dbReference>
<dbReference type="Pfam" id="PF07973">
    <property type="entry name" value="tRNA_SAD"/>
    <property type="match status" value="1"/>
</dbReference>
<dbReference type="PRINTS" id="PR00980">
    <property type="entry name" value="TRNASYNTHALA"/>
</dbReference>
<dbReference type="SMART" id="SM00863">
    <property type="entry name" value="tRNA_SAD"/>
    <property type="match status" value="1"/>
</dbReference>
<dbReference type="SUPFAM" id="SSF55681">
    <property type="entry name" value="Class II aaRS and biotin synthetases"/>
    <property type="match status" value="1"/>
</dbReference>
<dbReference type="SUPFAM" id="SSF101353">
    <property type="entry name" value="Putative anticodon-binding domain of alanyl-tRNA synthetase (AlaRS)"/>
    <property type="match status" value="1"/>
</dbReference>
<dbReference type="SUPFAM" id="SSF55186">
    <property type="entry name" value="ThrRS/AlaRS common domain"/>
    <property type="match status" value="1"/>
</dbReference>
<dbReference type="SUPFAM" id="SSF50447">
    <property type="entry name" value="Translation proteins"/>
    <property type="match status" value="1"/>
</dbReference>
<dbReference type="PROSITE" id="PS50860">
    <property type="entry name" value="AA_TRNA_LIGASE_II_ALA"/>
    <property type="match status" value="1"/>
</dbReference>
<organism>
    <name type="scientific">Dinoroseobacter shibae (strain DSM 16493 / NCIMB 14021 / DFL 12)</name>
    <dbReference type="NCBI Taxonomy" id="398580"/>
    <lineage>
        <taxon>Bacteria</taxon>
        <taxon>Pseudomonadati</taxon>
        <taxon>Pseudomonadota</taxon>
        <taxon>Alphaproteobacteria</taxon>
        <taxon>Rhodobacterales</taxon>
        <taxon>Roseobacteraceae</taxon>
        <taxon>Dinoroseobacter</taxon>
    </lineage>
</organism>